<keyword id="KW-0963">Cytoplasm</keyword>
<keyword id="KW-0342">GTP-binding</keyword>
<keyword id="KW-0378">Hydrolase</keyword>
<keyword id="KW-0460">Magnesium</keyword>
<keyword id="KW-0479">Metal-binding</keyword>
<keyword id="KW-0547">Nucleotide-binding</keyword>
<keyword id="KW-1185">Reference proteome</keyword>
<evidence type="ECO:0000255" key="1">
    <source>
        <dbReference type="HAMAP-Rule" id="MF_01454"/>
    </source>
</evidence>
<evidence type="ECO:0000255" key="2">
    <source>
        <dbReference type="PROSITE-ProRule" id="PRU01229"/>
    </source>
</evidence>
<evidence type="ECO:0000255" key="3">
    <source>
        <dbReference type="PROSITE-ProRule" id="PRU01231"/>
    </source>
</evidence>
<organism>
    <name type="scientific">Acholeplasma laidlawii (strain PG-8A)</name>
    <dbReference type="NCBI Taxonomy" id="441768"/>
    <lineage>
        <taxon>Bacteria</taxon>
        <taxon>Bacillati</taxon>
        <taxon>Mycoplasmatota</taxon>
        <taxon>Mollicutes</taxon>
        <taxon>Acholeplasmatales</taxon>
        <taxon>Acholeplasmataceae</taxon>
        <taxon>Acholeplasma</taxon>
    </lineage>
</organism>
<accession>A9NF57</accession>
<protein>
    <recommendedName>
        <fullName evidence="1">GTPase Obg</fullName>
        <ecNumber evidence="1">3.6.5.-</ecNumber>
    </recommendedName>
    <alternativeName>
        <fullName evidence="1">GTP-binding protein Obg</fullName>
    </alternativeName>
</protein>
<dbReference type="EC" id="3.6.5.-" evidence="1"/>
<dbReference type="EMBL" id="CP000896">
    <property type="protein sequence ID" value="ABX80987.1"/>
    <property type="molecule type" value="Genomic_DNA"/>
</dbReference>
<dbReference type="RefSeq" id="WP_012242318.1">
    <property type="nucleotide sequence ID" value="NC_010163.1"/>
</dbReference>
<dbReference type="SMR" id="A9NF57"/>
<dbReference type="STRING" id="441768.ACL_0365"/>
<dbReference type="GeneID" id="41338547"/>
<dbReference type="KEGG" id="acl:ACL_0365"/>
<dbReference type="eggNOG" id="COG0536">
    <property type="taxonomic scope" value="Bacteria"/>
</dbReference>
<dbReference type="HOGENOM" id="CLU_011747_2_1_14"/>
<dbReference type="OrthoDB" id="9807318at2"/>
<dbReference type="Proteomes" id="UP000008558">
    <property type="component" value="Chromosome"/>
</dbReference>
<dbReference type="GO" id="GO:0005737">
    <property type="term" value="C:cytoplasm"/>
    <property type="evidence" value="ECO:0007669"/>
    <property type="project" value="UniProtKB-SubCell"/>
</dbReference>
<dbReference type="GO" id="GO:0005525">
    <property type="term" value="F:GTP binding"/>
    <property type="evidence" value="ECO:0007669"/>
    <property type="project" value="UniProtKB-UniRule"/>
</dbReference>
<dbReference type="GO" id="GO:0003924">
    <property type="term" value="F:GTPase activity"/>
    <property type="evidence" value="ECO:0007669"/>
    <property type="project" value="UniProtKB-UniRule"/>
</dbReference>
<dbReference type="GO" id="GO:0000287">
    <property type="term" value="F:magnesium ion binding"/>
    <property type="evidence" value="ECO:0007669"/>
    <property type="project" value="InterPro"/>
</dbReference>
<dbReference type="GO" id="GO:0042254">
    <property type="term" value="P:ribosome biogenesis"/>
    <property type="evidence" value="ECO:0007669"/>
    <property type="project" value="UniProtKB-UniRule"/>
</dbReference>
<dbReference type="CDD" id="cd01898">
    <property type="entry name" value="Obg"/>
    <property type="match status" value="1"/>
</dbReference>
<dbReference type="FunFam" id="2.70.210.12:FF:000001">
    <property type="entry name" value="GTPase Obg"/>
    <property type="match status" value="1"/>
</dbReference>
<dbReference type="Gene3D" id="3.30.300.350">
    <property type="entry name" value="GTP-binding protein OBG, C-terminal domain"/>
    <property type="match status" value="1"/>
</dbReference>
<dbReference type="Gene3D" id="2.70.210.12">
    <property type="entry name" value="GTP1/OBG domain"/>
    <property type="match status" value="1"/>
</dbReference>
<dbReference type="Gene3D" id="3.40.50.300">
    <property type="entry name" value="P-loop containing nucleotide triphosphate hydrolases"/>
    <property type="match status" value="1"/>
</dbReference>
<dbReference type="HAMAP" id="MF_01454">
    <property type="entry name" value="GTPase_Obg"/>
    <property type="match status" value="1"/>
</dbReference>
<dbReference type="InterPro" id="IPR031167">
    <property type="entry name" value="G_OBG"/>
</dbReference>
<dbReference type="InterPro" id="IPR006073">
    <property type="entry name" value="GTP-bd"/>
</dbReference>
<dbReference type="InterPro" id="IPR014100">
    <property type="entry name" value="GTP-bd_Obg/CgtA"/>
</dbReference>
<dbReference type="InterPro" id="IPR036346">
    <property type="entry name" value="GTP-bd_prot_GTP1/OBG_C_sf"/>
</dbReference>
<dbReference type="InterPro" id="IPR006169">
    <property type="entry name" value="GTP1_OBG_dom"/>
</dbReference>
<dbReference type="InterPro" id="IPR036726">
    <property type="entry name" value="GTP1_OBG_dom_sf"/>
</dbReference>
<dbReference type="InterPro" id="IPR045086">
    <property type="entry name" value="OBG_GTPase"/>
</dbReference>
<dbReference type="InterPro" id="IPR015349">
    <property type="entry name" value="OCT_dom"/>
</dbReference>
<dbReference type="InterPro" id="IPR027417">
    <property type="entry name" value="P-loop_NTPase"/>
</dbReference>
<dbReference type="InterPro" id="IPR005225">
    <property type="entry name" value="Small_GTP-bd"/>
</dbReference>
<dbReference type="NCBIfam" id="TIGR02729">
    <property type="entry name" value="Obg_CgtA"/>
    <property type="match status" value="1"/>
</dbReference>
<dbReference type="NCBIfam" id="TIGR03595">
    <property type="entry name" value="Obg_CgtA_exten"/>
    <property type="match status" value="1"/>
</dbReference>
<dbReference type="NCBIfam" id="NF008954">
    <property type="entry name" value="PRK12296.1"/>
    <property type="match status" value="1"/>
</dbReference>
<dbReference type="NCBIfam" id="NF008955">
    <property type="entry name" value="PRK12297.1"/>
    <property type="match status" value="1"/>
</dbReference>
<dbReference type="NCBIfam" id="NF008956">
    <property type="entry name" value="PRK12299.1"/>
    <property type="match status" value="1"/>
</dbReference>
<dbReference type="NCBIfam" id="TIGR00231">
    <property type="entry name" value="small_GTP"/>
    <property type="match status" value="1"/>
</dbReference>
<dbReference type="PANTHER" id="PTHR11702">
    <property type="entry name" value="DEVELOPMENTALLY REGULATED GTP-BINDING PROTEIN-RELATED"/>
    <property type="match status" value="1"/>
</dbReference>
<dbReference type="PANTHER" id="PTHR11702:SF31">
    <property type="entry name" value="MITOCHONDRIAL RIBOSOME-ASSOCIATED GTPASE 2"/>
    <property type="match status" value="1"/>
</dbReference>
<dbReference type="Pfam" id="PF09269">
    <property type="entry name" value="DUF1967"/>
    <property type="match status" value="1"/>
</dbReference>
<dbReference type="Pfam" id="PF01018">
    <property type="entry name" value="GTP1_OBG"/>
    <property type="match status" value="1"/>
</dbReference>
<dbReference type="Pfam" id="PF01926">
    <property type="entry name" value="MMR_HSR1"/>
    <property type="match status" value="1"/>
</dbReference>
<dbReference type="PRINTS" id="PR00326">
    <property type="entry name" value="GTP1OBG"/>
</dbReference>
<dbReference type="SUPFAM" id="SSF102741">
    <property type="entry name" value="Obg GTP-binding protein C-terminal domain"/>
    <property type="match status" value="1"/>
</dbReference>
<dbReference type="SUPFAM" id="SSF82051">
    <property type="entry name" value="Obg GTP-binding protein N-terminal domain"/>
    <property type="match status" value="1"/>
</dbReference>
<dbReference type="SUPFAM" id="SSF52540">
    <property type="entry name" value="P-loop containing nucleoside triphosphate hydrolases"/>
    <property type="match status" value="1"/>
</dbReference>
<dbReference type="PROSITE" id="PS51710">
    <property type="entry name" value="G_OBG"/>
    <property type="match status" value="1"/>
</dbReference>
<dbReference type="PROSITE" id="PS51883">
    <property type="entry name" value="OBG"/>
    <property type="match status" value="1"/>
</dbReference>
<dbReference type="PROSITE" id="PS51881">
    <property type="entry name" value="OCT"/>
    <property type="match status" value="1"/>
</dbReference>
<sequence>MSAFVDAVTVEVKAGRGGNGKVAFRREAHVEFGGPAGGNGGRGGHIYFIGDEGKNTLIDLKYNRHIKAANGVHGGPKGMHGAHAEDTYVRVPLGTIVYDDKENLIGEVLEHGQTLLIAQGGKGGRGNMAFASNNNKAPDFAEQGDLGQIFLAKVELQVLADVGLLGYPNVGKSTLITRISNAKAKIADYQFTTLSPQLGMVNVEDDAFVVADLPGLIEFAHLGVGLGLQFLKHVERCRVLLHIVSMDSLDPLDDYNKINNELVLYDEKLKDRTQIVVANKMDVEGAQEKFEAFKKALKDVKVIPISALMNDGIQTLKYEIATTLKTIPKFAPKDTTKHYTLNAEDAVDFIINKGDDGVFELTGDKLFVLFNRTDFNNESAVKRFARQLRGLGIEDALREHGVVHGDIVRIFSYEFEYLE</sequence>
<proteinExistence type="inferred from homology"/>
<feature type="chain" id="PRO_0000385656" description="GTPase Obg">
    <location>
        <begin position="1"/>
        <end position="419"/>
    </location>
</feature>
<feature type="domain" description="Obg" evidence="3">
    <location>
        <begin position="2"/>
        <end position="159"/>
    </location>
</feature>
<feature type="domain" description="OBG-type G" evidence="1">
    <location>
        <begin position="160"/>
        <end position="325"/>
    </location>
</feature>
<feature type="domain" description="OCT" evidence="2">
    <location>
        <begin position="341"/>
        <end position="419"/>
    </location>
</feature>
<feature type="binding site" evidence="1">
    <location>
        <begin position="166"/>
        <end position="173"/>
    </location>
    <ligand>
        <name>GTP</name>
        <dbReference type="ChEBI" id="CHEBI:37565"/>
    </ligand>
</feature>
<feature type="binding site" evidence="1">
    <location>
        <position position="173"/>
    </location>
    <ligand>
        <name>Mg(2+)</name>
        <dbReference type="ChEBI" id="CHEBI:18420"/>
    </ligand>
</feature>
<feature type="binding site" evidence="1">
    <location>
        <begin position="191"/>
        <end position="195"/>
    </location>
    <ligand>
        <name>GTP</name>
        <dbReference type="ChEBI" id="CHEBI:37565"/>
    </ligand>
</feature>
<feature type="binding site" evidence="1">
    <location>
        <position position="193"/>
    </location>
    <ligand>
        <name>Mg(2+)</name>
        <dbReference type="ChEBI" id="CHEBI:18420"/>
    </ligand>
</feature>
<feature type="binding site" evidence="1">
    <location>
        <begin position="212"/>
        <end position="215"/>
    </location>
    <ligand>
        <name>GTP</name>
        <dbReference type="ChEBI" id="CHEBI:37565"/>
    </ligand>
</feature>
<feature type="binding site" evidence="1">
    <location>
        <begin position="279"/>
        <end position="282"/>
    </location>
    <ligand>
        <name>GTP</name>
        <dbReference type="ChEBI" id="CHEBI:37565"/>
    </ligand>
</feature>
<feature type="binding site" evidence="1">
    <location>
        <begin position="306"/>
        <end position="308"/>
    </location>
    <ligand>
        <name>GTP</name>
        <dbReference type="ChEBI" id="CHEBI:37565"/>
    </ligand>
</feature>
<name>OBG_ACHLI</name>
<comment type="function">
    <text evidence="1">An essential GTPase which binds GTP, GDP and possibly (p)ppGpp with moderate affinity, with high nucleotide exchange rates and a fairly low GTP hydrolysis rate. Plays a role in control of the cell cycle, stress response, ribosome biogenesis and in those bacteria that undergo differentiation, in morphogenesis control.</text>
</comment>
<comment type="cofactor">
    <cofactor evidence="1">
        <name>Mg(2+)</name>
        <dbReference type="ChEBI" id="CHEBI:18420"/>
    </cofactor>
</comment>
<comment type="subunit">
    <text evidence="1">Monomer.</text>
</comment>
<comment type="subcellular location">
    <subcellularLocation>
        <location evidence="1">Cytoplasm</location>
    </subcellularLocation>
</comment>
<comment type="similarity">
    <text evidence="1">Belongs to the TRAFAC class OBG-HflX-like GTPase superfamily. OBG GTPase family.</text>
</comment>
<gene>
    <name evidence="1" type="primary">obg</name>
    <name type="ordered locus">ACL_0365</name>
</gene>
<reference key="1">
    <citation type="journal article" date="2011" name="J. Bacteriol.">
        <title>Complete genome and proteome of Acholeplasma laidlawii.</title>
        <authorList>
            <person name="Lazarev V.N."/>
            <person name="Levitskii S.A."/>
            <person name="Basovskii Y.I."/>
            <person name="Chukin M.M."/>
            <person name="Akopian T.A."/>
            <person name="Vereshchagin V.V."/>
            <person name="Kostrjukova E.S."/>
            <person name="Kovaleva G.Y."/>
            <person name="Kazanov M.D."/>
            <person name="Malko D.B."/>
            <person name="Vitreschak A.G."/>
            <person name="Sernova N.V."/>
            <person name="Gelfand M.S."/>
            <person name="Demina I.A."/>
            <person name="Serebryakova M.V."/>
            <person name="Galyamina M.A."/>
            <person name="Vtyurin N.N."/>
            <person name="Rogov S.I."/>
            <person name="Alexeev D.G."/>
            <person name="Ladygina V.G."/>
            <person name="Govorun V.M."/>
        </authorList>
    </citation>
    <scope>NUCLEOTIDE SEQUENCE [LARGE SCALE GENOMIC DNA]</scope>
    <source>
        <strain>PG-8A</strain>
    </source>
</reference>